<feature type="chain" id="PRO_1000126627" description="Large ribosomal subunit protein bL31">
    <location>
        <begin position="1"/>
        <end position="70"/>
    </location>
</feature>
<feature type="binding site" evidence="1">
    <location>
        <position position="16"/>
    </location>
    <ligand>
        <name>Zn(2+)</name>
        <dbReference type="ChEBI" id="CHEBI:29105"/>
    </ligand>
</feature>
<feature type="binding site" evidence="1">
    <location>
        <position position="18"/>
    </location>
    <ligand>
        <name>Zn(2+)</name>
        <dbReference type="ChEBI" id="CHEBI:29105"/>
    </ligand>
</feature>
<feature type="binding site" evidence="1">
    <location>
        <position position="36"/>
    </location>
    <ligand>
        <name>Zn(2+)</name>
        <dbReference type="ChEBI" id="CHEBI:29105"/>
    </ligand>
</feature>
<feature type="binding site" evidence="1">
    <location>
        <position position="39"/>
    </location>
    <ligand>
        <name>Zn(2+)</name>
        <dbReference type="ChEBI" id="CHEBI:29105"/>
    </ligand>
</feature>
<accession>A7HJF3</accession>
<proteinExistence type="inferred from homology"/>
<protein>
    <recommendedName>
        <fullName evidence="1">Large ribosomal subunit protein bL31</fullName>
    </recommendedName>
    <alternativeName>
        <fullName evidence="2">50S ribosomal protein L31</fullName>
    </alternativeName>
</protein>
<sequence length="70" mass="7923">MKKGIHPEMRLLTVRCACGAEHKIWTTKEQLKIDVCSNCHPLYKGSGGASLIVDTEGRVQKFKKKFEGKY</sequence>
<name>RL31_FERNB</name>
<organism>
    <name type="scientific">Fervidobacterium nodosum (strain ATCC 35602 / DSM 5306 / Rt17-B1)</name>
    <dbReference type="NCBI Taxonomy" id="381764"/>
    <lineage>
        <taxon>Bacteria</taxon>
        <taxon>Thermotogati</taxon>
        <taxon>Thermotogota</taxon>
        <taxon>Thermotogae</taxon>
        <taxon>Thermotogales</taxon>
        <taxon>Fervidobacteriaceae</taxon>
        <taxon>Fervidobacterium</taxon>
    </lineage>
</organism>
<dbReference type="EMBL" id="CP000771">
    <property type="protein sequence ID" value="ABS60036.1"/>
    <property type="molecule type" value="Genomic_DNA"/>
</dbReference>
<dbReference type="RefSeq" id="WP_011993359.1">
    <property type="nucleotide sequence ID" value="NC_009718.1"/>
</dbReference>
<dbReference type="STRING" id="381764.Fnod_0169"/>
<dbReference type="KEGG" id="fno:Fnod_0169"/>
<dbReference type="eggNOG" id="COG0254">
    <property type="taxonomic scope" value="Bacteria"/>
</dbReference>
<dbReference type="HOGENOM" id="CLU_114306_4_3_0"/>
<dbReference type="OrthoDB" id="9803251at2"/>
<dbReference type="Proteomes" id="UP000002415">
    <property type="component" value="Chromosome"/>
</dbReference>
<dbReference type="GO" id="GO:1990904">
    <property type="term" value="C:ribonucleoprotein complex"/>
    <property type="evidence" value="ECO:0007669"/>
    <property type="project" value="UniProtKB-KW"/>
</dbReference>
<dbReference type="GO" id="GO:0005840">
    <property type="term" value="C:ribosome"/>
    <property type="evidence" value="ECO:0007669"/>
    <property type="project" value="UniProtKB-KW"/>
</dbReference>
<dbReference type="GO" id="GO:0046872">
    <property type="term" value="F:metal ion binding"/>
    <property type="evidence" value="ECO:0007669"/>
    <property type="project" value="UniProtKB-KW"/>
</dbReference>
<dbReference type="GO" id="GO:0019843">
    <property type="term" value="F:rRNA binding"/>
    <property type="evidence" value="ECO:0007669"/>
    <property type="project" value="UniProtKB-KW"/>
</dbReference>
<dbReference type="GO" id="GO:0003735">
    <property type="term" value="F:structural constituent of ribosome"/>
    <property type="evidence" value="ECO:0007669"/>
    <property type="project" value="InterPro"/>
</dbReference>
<dbReference type="GO" id="GO:0006412">
    <property type="term" value="P:translation"/>
    <property type="evidence" value="ECO:0007669"/>
    <property type="project" value="UniProtKB-UniRule"/>
</dbReference>
<dbReference type="Gene3D" id="4.10.830.30">
    <property type="entry name" value="Ribosomal protein L31"/>
    <property type="match status" value="1"/>
</dbReference>
<dbReference type="HAMAP" id="MF_00501">
    <property type="entry name" value="Ribosomal_bL31_1"/>
    <property type="match status" value="1"/>
</dbReference>
<dbReference type="InterPro" id="IPR034704">
    <property type="entry name" value="Ribosomal_bL28/bL31-like_sf"/>
</dbReference>
<dbReference type="InterPro" id="IPR002150">
    <property type="entry name" value="Ribosomal_bL31"/>
</dbReference>
<dbReference type="InterPro" id="IPR027491">
    <property type="entry name" value="Ribosomal_bL31_A"/>
</dbReference>
<dbReference type="InterPro" id="IPR042105">
    <property type="entry name" value="Ribosomal_bL31_sf"/>
</dbReference>
<dbReference type="NCBIfam" id="TIGR00105">
    <property type="entry name" value="L31"/>
    <property type="match status" value="1"/>
</dbReference>
<dbReference type="NCBIfam" id="NF000612">
    <property type="entry name" value="PRK00019.1"/>
    <property type="match status" value="1"/>
</dbReference>
<dbReference type="PANTHER" id="PTHR33280">
    <property type="entry name" value="50S RIBOSOMAL PROTEIN L31, CHLOROPLASTIC"/>
    <property type="match status" value="1"/>
</dbReference>
<dbReference type="PANTHER" id="PTHR33280:SF1">
    <property type="entry name" value="LARGE RIBOSOMAL SUBUNIT PROTEIN BL31C"/>
    <property type="match status" value="1"/>
</dbReference>
<dbReference type="Pfam" id="PF01197">
    <property type="entry name" value="Ribosomal_L31"/>
    <property type="match status" value="1"/>
</dbReference>
<dbReference type="PRINTS" id="PR01249">
    <property type="entry name" value="RIBOSOMALL31"/>
</dbReference>
<dbReference type="SUPFAM" id="SSF143800">
    <property type="entry name" value="L28p-like"/>
    <property type="match status" value="1"/>
</dbReference>
<comment type="function">
    <text evidence="1">Binds the 23S rRNA.</text>
</comment>
<comment type="cofactor">
    <cofactor evidence="1">
        <name>Zn(2+)</name>
        <dbReference type="ChEBI" id="CHEBI:29105"/>
    </cofactor>
    <text evidence="1">Binds 1 zinc ion per subunit.</text>
</comment>
<comment type="subunit">
    <text evidence="1">Part of the 50S ribosomal subunit.</text>
</comment>
<comment type="similarity">
    <text evidence="1">Belongs to the bacterial ribosomal protein bL31 family. Type A subfamily.</text>
</comment>
<evidence type="ECO:0000255" key="1">
    <source>
        <dbReference type="HAMAP-Rule" id="MF_00501"/>
    </source>
</evidence>
<evidence type="ECO:0000305" key="2"/>
<keyword id="KW-0479">Metal-binding</keyword>
<keyword id="KW-1185">Reference proteome</keyword>
<keyword id="KW-0687">Ribonucleoprotein</keyword>
<keyword id="KW-0689">Ribosomal protein</keyword>
<keyword id="KW-0694">RNA-binding</keyword>
<keyword id="KW-0699">rRNA-binding</keyword>
<keyword id="KW-0862">Zinc</keyword>
<reference key="1">
    <citation type="submission" date="2007-07" db="EMBL/GenBank/DDBJ databases">
        <title>Complete sequence of Fervidobacterium nodosum Rt17-B1.</title>
        <authorList>
            <consortium name="US DOE Joint Genome Institute"/>
            <person name="Copeland A."/>
            <person name="Lucas S."/>
            <person name="Lapidus A."/>
            <person name="Barry K."/>
            <person name="Glavina del Rio T."/>
            <person name="Dalin E."/>
            <person name="Tice H."/>
            <person name="Pitluck S."/>
            <person name="Saunders E."/>
            <person name="Brettin T."/>
            <person name="Bruce D."/>
            <person name="Detter J.C."/>
            <person name="Han C."/>
            <person name="Schmutz J."/>
            <person name="Larimer F."/>
            <person name="Land M."/>
            <person name="Hauser L."/>
            <person name="Kyrpides N."/>
            <person name="Mikhailova N."/>
            <person name="Nelson K."/>
            <person name="Gogarten J.P."/>
            <person name="Noll K."/>
            <person name="Richardson P."/>
        </authorList>
    </citation>
    <scope>NUCLEOTIDE SEQUENCE [LARGE SCALE GENOMIC DNA]</scope>
    <source>
        <strain>ATCC 35602 / DSM 5306 / Rt17-B1</strain>
    </source>
</reference>
<gene>
    <name evidence="1" type="primary">rpmE</name>
    <name type="ordered locus">Fnod_0169</name>
</gene>